<evidence type="ECO:0000255" key="1"/>
<evidence type="ECO:0000305" key="2"/>
<organism>
    <name type="scientific">Methanocaldococcus jannaschii (strain ATCC 43067 / DSM 2661 / JAL-1 / JCM 10045 / NBRC 100440)</name>
    <name type="common">Methanococcus jannaschii</name>
    <dbReference type="NCBI Taxonomy" id="243232"/>
    <lineage>
        <taxon>Archaea</taxon>
        <taxon>Methanobacteriati</taxon>
        <taxon>Methanobacteriota</taxon>
        <taxon>Methanomada group</taxon>
        <taxon>Methanococci</taxon>
        <taxon>Methanococcales</taxon>
        <taxon>Methanocaldococcaceae</taxon>
        <taxon>Methanocaldococcus</taxon>
    </lineage>
</organism>
<reference key="1">
    <citation type="journal article" date="1996" name="Science">
        <title>Complete genome sequence of the methanogenic archaeon, Methanococcus jannaschii.</title>
        <authorList>
            <person name="Bult C.J."/>
            <person name="White O."/>
            <person name="Olsen G.J."/>
            <person name="Zhou L."/>
            <person name="Fleischmann R.D."/>
            <person name="Sutton G.G."/>
            <person name="Blake J.A."/>
            <person name="FitzGerald L.M."/>
            <person name="Clayton R.A."/>
            <person name="Gocayne J.D."/>
            <person name="Kerlavage A.R."/>
            <person name="Dougherty B.A."/>
            <person name="Tomb J.-F."/>
            <person name="Adams M.D."/>
            <person name="Reich C.I."/>
            <person name="Overbeek R."/>
            <person name="Kirkness E.F."/>
            <person name="Weinstock K.G."/>
            <person name="Merrick J.M."/>
            <person name="Glodek A."/>
            <person name="Scott J.L."/>
            <person name="Geoghagen N.S.M."/>
            <person name="Weidman J.F."/>
            <person name="Fuhrmann J.L."/>
            <person name="Nguyen D."/>
            <person name="Utterback T.R."/>
            <person name="Kelley J.M."/>
            <person name="Peterson J.D."/>
            <person name="Sadow P.W."/>
            <person name="Hanna M.C."/>
            <person name="Cotton M.D."/>
            <person name="Roberts K.M."/>
            <person name="Hurst M.A."/>
            <person name="Kaine B.P."/>
            <person name="Borodovsky M."/>
            <person name="Klenk H.-P."/>
            <person name="Fraser C.M."/>
            <person name="Smith H.O."/>
            <person name="Woese C.R."/>
            <person name="Venter J.C."/>
        </authorList>
    </citation>
    <scope>NUCLEOTIDE SEQUENCE [LARGE SCALE GENOMIC DNA]</scope>
    <source>
        <strain>ATCC 43067 / DSM 2661 / JAL-1 / JCM 10045 / NBRC 100440</strain>
    </source>
</reference>
<proteinExistence type="predicted"/>
<protein>
    <recommendedName>
        <fullName>Uncharacterized protein MJ1393</fullName>
    </recommendedName>
</protein>
<accession>Q58788</accession>
<keyword id="KW-0472">Membrane</keyword>
<keyword id="KW-1185">Reference proteome</keyword>
<keyword id="KW-0812">Transmembrane</keyword>
<keyword id="KW-1133">Transmembrane helix</keyword>
<comment type="subcellular location">
    <subcellularLocation>
        <location evidence="2">Membrane</location>
        <topology evidence="2">Single-pass membrane protein</topology>
    </subcellularLocation>
</comment>
<comment type="similarity">
    <text evidence="2">To M.jannaschii MJ1394 and A.fulgidus AF2028.</text>
</comment>
<gene>
    <name type="ordered locus">MJ1393</name>
</gene>
<name>Y1393_METJA</name>
<sequence length="608" mass="66768">MRKLIFMALLMSLLFIGTVFGYGDNGPLYVAYYEKYNITGNTTGDGLVSSTIESITGYIVINNTGTTINDTLYDVWVAVNISNNITGPEVYVNGTPKGVFIESSAPAYTNLPNANTYIHIPILPNNSYVIIKFAIDKSITGVPLIINETYSDTKIPSERLSNWSVYLNISRNVSALPATDTPVSVIMTKYLSNDPNNYGSDTWNFLNITGAIANEGSITLWDGPYFLPGYNDSLTWTGVVINTTKNATITINITGNNTYTNRTGTLMKYGFAVIFFEFNGTKSGTKIEGIYATGYGGVSATKEGPFLNASSGKYEIWYESANVSNKASSYYFNLTHVTIWAVNGSNPVILDPFNITLLIPNSKQTSSPNEILSPGSVWSSTKYAFTFDGIPVVWANCTFKVADENITLINRSINEYSTKYGSSYVVVEEIYVVGSYLIKVTKHIVPDADGTYDIYIVVENIGSVKTPEYVYVYDLIPKNFTVSDEWVNQSSMLIAEGNHTITTNPRYNLSMWWALHAIYPGADGDGNWNDTAEILANKTVVIHYKLNGTGEFYPSDAFIVGIDPTNSLLPTTSPKITTVAGTVENNSEPFLALLTLLVGLGIIIRRVM</sequence>
<dbReference type="EMBL" id="L77117">
    <property type="protein sequence ID" value="AAB99403.1"/>
    <property type="molecule type" value="Genomic_DNA"/>
</dbReference>
<dbReference type="PIR" id="H64473">
    <property type="entry name" value="H64473"/>
</dbReference>
<dbReference type="RefSeq" id="WP_010870910.1">
    <property type="nucleotide sequence ID" value="NC_000909.1"/>
</dbReference>
<dbReference type="FunCoup" id="Q58788">
    <property type="interactions" value="1"/>
</dbReference>
<dbReference type="STRING" id="243232.MJ_1393"/>
<dbReference type="PaxDb" id="243232-MJ_1393"/>
<dbReference type="EnsemblBacteria" id="AAB99403">
    <property type="protein sequence ID" value="AAB99403"/>
    <property type="gene ID" value="MJ_1393"/>
</dbReference>
<dbReference type="GeneID" id="1452296"/>
<dbReference type="KEGG" id="mja:MJ_1393"/>
<dbReference type="eggNOG" id="arCOG06147">
    <property type="taxonomic scope" value="Archaea"/>
</dbReference>
<dbReference type="HOGENOM" id="CLU_445940_0_0_2"/>
<dbReference type="InParanoid" id="Q58788"/>
<dbReference type="OrthoDB" id="147991at2157"/>
<dbReference type="PhylomeDB" id="Q58788"/>
<dbReference type="Proteomes" id="UP000000805">
    <property type="component" value="Chromosome"/>
</dbReference>
<dbReference type="GO" id="GO:0016020">
    <property type="term" value="C:membrane"/>
    <property type="evidence" value="ECO:0007669"/>
    <property type="project" value="UniProtKB-SubCell"/>
</dbReference>
<feature type="chain" id="PRO_0000107307" description="Uncharacterized protein MJ1393">
    <location>
        <begin position="1"/>
        <end position="608"/>
    </location>
</feature>
<feature type="transmembrane region" description="Helical" evidence="1">
    <location>
        <begin position="4"/>
        <end position="24"/>
    </location>
</feature>